<comment type="function">
    <text evidence="1">May play a role in DNA repair. It seems to be involved in an RecBC-independent recombinational process of DNA repair. It may act with RecF and RecO.</text>
</comment>
<comment type="similarity">
    <text evidence="1">Belongs to the RecR family.</text>
</comment>
<feature type="chain" id="PRO_1000074132" description="Recombination protein RecR">
    <location>
        <begin position="1"/>
        <end position="199"/>
    </location>
</feature>
<feature type="domain" description="Toprim" evidence="1">
    <location>
        <begin position="81"/>
        <end position="176"/>
    </location>
</feature>
<feature type="zinc finger region" description="C4-type" evidence="1">
    <location>
        <begin position="57"/>
        <end position="72"/>
    </location>
</feature>
<organism>
    <name type="scientific">Shewanella halifaxensis (strain HAW-EB4)</name>
    <dbReference type="NCBI Taxonomy" id="458817"/>
    <lineage>
        <taxon>Bacteria</taxon>
        <taxon>Pseudomonadati</taxon>
        <taxon>Pseudomonadota</taxon>
        <taxon>Gammaproteobacteria</taxon>
        <taxon>Alteromonadales</taxon>
        <taxon>Shewanellaceae</taxon>
        <taxon>Shewanella</taxon>
    </lineage>
</organism>
<proteinExistence type="inferred from homology"/>
<evidence type="ECO:0000255" key="1">
    <source>
        <dbReference type="HAMAP-Rule" id="MF_00017"/>
    </source>
</evidence>
<dbReference type="EMBL" id="CP000931">
    <property type="protein sequence ID" value="ABZ76161.1"/>
    <property type="molecule type" value="Genomic_DNA"/>
</dbReference>
<dbReference type="RefSeq" id="WP_012276699.1">
    <property type="nucleotide sequence ID" value="NC_010334.1"/>
</dbReference>
<dbReference type="SMR" id="B0TP04"/>
<dbReference type="STRING" id="458817.Shal_1595"/>
<dbReference type="KEGG" id="shl:Shal_1595"/>
<dbReference type="eggNOG" id="COG0353">
    <property type="taxonomic scope" value="Bacteria"/>
</dbReference>
<dbReference type="HOGENOM" id="CLU_060739_1_2_6"/>
<dbReference type="OrthoDB" id="9802672at2"/>
<dbReference type="Proteomes" id="UP000001317">
    <property type="component" value="Chromosome"/>
</dbReference>
<dbReference type="GO" id="GO:0003677">
    <property type="term" value="F:DNA binding"/>
    <property type="evidence" value="ECO:0007669"/>
    <property type="project" value="UniProtKB-UniRule"/>
</dbReference>
<dbReference type="GO" id="GO:0008270">
    <property type="term" value="F:zinc ion binding"/>
    <property type="evidence" value="ECO:0007669"/>
    <property type="project" value="UniProtKB-KW"/>
</dbReference>
<dbReference type="GO" id="GO:0006310">
    <property type="term" value="P:DNA recombination"/>
    <property type="evidence" value="ECO:0007669"/>
    <property type="project" value="UniProtKB-UniRule"/>
</dbReference>
<dbReference type="GO" id="GO:0006281">
    <property type="term" value="P:DNA repair"/>
    <property type="evidence" value="ECO:0007669"/>
    <property type="project" value="UniProtKB-UniRule"/>
</dbReference>
<dbReference type="CDD" id="cd01025">
    <property type="entry name" value="TOPRIM_recR"/>
    <property type="match status" value="1"/>
</dbReference>
<dbReference type="FunFam" id="3.40.1360.10:FF:000001">
    <property type="entry name" value="Recombination protein RecR"/>
    <property type="match status" value="1"/>
</dbReference>
<dbReference type="Gene3D" id="3.40.1360.10">
    <property type="match status" value="1"/>
</dbReference>
<dbReference type="Gene3D" id="6.10.250.240">
    <property type="match status" value="1"/>
</dbReference>
<dbReference type="Gene3D" id="1.10.8.420">
    <property type="entry name" value="RecR Domain 1"/>
    <property type="match status" value="1"/>
</dbReference>
<dbReference type="HAMAP" id="MF_00017">
    <property type="entry name" value="RecR"/>
    <property type="match status" value="1"/>
</dbReference>
<dbReference type="InterPro" id="IPR000093">
    <property type="entry name" value="DNA_Rcmb_RecR"/>
</dbReference>
<dbReference type="InterPro" id="IPR023627">
    <property type="entry name" value="Rcmb_RecR"/>
</dbReference>
<dbReference type="InterPro" id="IPR015967">
    <property type="entry name" value="Rcmb_RecR_Znf"/>
</dbReference>
<dbReference type="InterPro" id="IPR006171">
    <property type="entry name" value="TOPRIM_dom"/>
</dbReference>
<dbReference type="InterPro" id="IPR034137">
    <property type="entry name" value="TOPRIM_RecR"/>
</dbReference>
<dbReference type="NCBIfam" id="TIGR00615">
    <property type="entry name" value="recR"/>
    <property type="match status" value="1"/>
</dbReference>
<dbReference type="PANTHER" id="PTHR30446">
    <property type="entry name" value="RECOMBINATION PROTEIN RECR"/>
    <property type="match status" value="1"/>
</dbReference>
<dbReference type="PANTHER" id="PTHR30446:SF0">
    <property type="entry name" value="RECOMBINATION PROTEIN RECR"/>
    <property type="match status" value="1"/>
</dbReference>
<dbReference type="Pfam" id="PF21175">
    <property type="entry name" value="RecR_C"/>
    <property type="match status" value="1"/>
</dbReference>
<dbReference type="Pfam" id="PF21176">
    <property type="entry name" value="RecR_HhH"/>
    <property type="match status" value="1"/>
</dbReference>
<dbReference type="Pfam" id="PF02132">
    <property type="entry name" value="RecR_ZnF"/>
    <property type="match status" value="1"/>
</dbReference>
<dbReference type="Pfam" id="PF13662">
    <property type="entry name" value="Toprim_4"/>
    <property type="match status" value="1"/>
</dbReference>
<dbReference type="SMART" id="SM00493">
    <property type="entry name" value="TOPRIM"/>
    <property type="match status" value="1"/>
</dbReference>
<dbReference type="SUPFAM" id="SSF111304">
    <property type="entry name" value="Recombination protein RecR"/>
    <property type="match status" value="1"/>
</dbReference>
<dbReference type="PROSITE" id="PS50880">
    <property type="entry name" value="TOPRIM"/>
    <property type="match status" value="1"/>
</dbReference>
<keyword id="KW-0227">DNA damage</keyword>
<keyword id="KW-0233">DNA recombination</keyword>
<keyword id="KW-0234">DNA repair</keyword>
<keyword id="KW-0479">Metal-binding</keyword>
<keyword id="KW-0862">Zinc</keyword>
<keyword id="KW-0863">Zinc-finger</keyword>
<sequence length="199" mass="21327">MKFSPLVDELIQSLRCLPGVGPKSAQRMAFQLLERDRKAGAKLADSLAKAMSDVGHCQSCRTFTEETYCPICVSTKRGHSDIICVVETPADVLAIEAGGHFSGRYFVLLGHLSPLDGVGPEELGLALLEQHLASGDVSELILATNPTVEGDATAHYIADMAKRHELMVSRIAHGVPVGGELEYVDSTTLALSFNGRLPI</sequence>
<name>RECR_SHEHH</name>
<accession>B0TP04</accession>
<reference key="1">
    <citation type="submission" date="2008-01" db="EMBL/GenBank/DDBJ databases">
        <title>Complete sequence of Shewanella halifaxensis HAW-EB4.</title>
        <authorList>
            <consortium name="US DOE Joint Genome Institute"/>
            <person name="Copeland A."/>
            <person name="Lucas S."/>
            <person name="Lapidus A."/>
            <person name="Glavina del Rio T."/>
            <person name="Dalin E."/>
            <person name="Tice H."/>
            <person name="Bruce D."/>
            <person name="Goodwin L."/>
            <person name="Pitluck S."/>
            <person name="Sims D."/>
            <person name="Brettin T."/>
            <person name="Detter J.C."/>
            <person name="Han C."/>
            <person name="Kuske C.R."/>
            <person name="Schmutz J."/>
            <person name="Larimer F."/>
            <person name="Land M."/>
            <person name="Hauser L."/>
            <person name="Kyrpides N."/>
            <person name="Kim E."/>
            <person name="Zhao J.-S."/>
            <person name="Richardson P."/>
        </authorList>
    </citation>
    <scope>NUCLEOTIDE SEQUENCE [LARGE SCALE GENOMIC DNA]</scope>
    <source>
        <strain>HAW-EB4</strain>
    </source>
</reference>
<gene>
    <name evidence="1" type="primary">recR</name>
    <name type="ordered locus">Shal_1595</name>
</gene>
<protein>
    <recommendedName>
        <fullName evidence="1">Recombination protein RecR</fullName>
    </recommendedName>
</protein>